<gene>
    <name evidence="1" type="primary">hisB</name>
    <name type="ordered locus">SAUSA300_2609</name>
</gene>
<comment type="catalytic activity">
    <reaction evidence="1">
        <text>D-erythro-1-(imidazol-4-yl)glycerol 3-phosphate = 3-(imidazol-4-yl)-2-oxopropyl phosphate + H2O</text>
        <dbReference type="Rhea" id="RHEA:11040"/>
        <dbReference type="ChEBI" id="CHEBI:15377"/>
        <dbReference type="ChEBI" id="CHEBI:57766"/>
        <dbReference type="ChEBI" id="CHEBI:58278"/>
        <dbReference type="EC" id="4.2.1.19"/>
    </reaction>
</comment>
<comment type="pathway">
    <text evidence="1">Amino-acid biosynthesis; L-histidine biosynthesis; L-histidine from 5-phospho-alpha-D-ribose 1-diphosphate: step 6/9.</text>
</comment>
<comment type="subcellular location">
    <subcellularLocation>
        <location evidence="1">Cytoplasm</location>
    </subcellularLocation>
</comment>
<comment type="similarity">
    <text evidence="1">Belongs to the imidazoleglycerol-phosphate dehydratase family.</text>
</comment>
<feature type="chain" id="PRO_1000010356" description="Imidazoleglycerol-phosphate dehydratase">
    <location>
        <begin position="1"/>
        <end position="192"/>
    </location>
</feature>
<name>HIS7_STAA3</name>
<reference key="1">
    <citation type="journal article" date="2006" name="Lancet">
        <title>Complete genome sequence of USA300, an epidemic clone of community-acquired meticillin-resistant Staphylococcus aureus.</title>
        <authorList>
            <person name="Diep B.A."/>
            <person name="Gill S.R."/>
            <person name="Chang R.F."/>
            <person name="Phan T.H."/>
            <person name="Chen J.H."/>
            <person name="Davidson M.G."/>
            <person name="Lin F."/>
            <person name="Lin J."/>
            <person name="Carleton H.A."/>
            <person name="Mongodin E.F."/>
            <person name="Sensabaugh G.F."/>
            <person name="Perdreau-Remington F."/>
        </authorList>
    </citation>
    <scope>NUCLEOTIDE SEQUENCE [LARGE SCALE GENOMIC DNA]</scope>
    <source>
        <strain>USA300</strain>
    </source>
</reference>
<organism>
    <name type="scientific">Staphylococcus aureus (strain USA300)</name>
    <dbReference type="NCBI Taxonomy" id="367830"/>
    <lineage>
        <taxon>Bacteria</taxon>
        <taxon>Bacillati</taxon>
        <taxon>Bacillota</taxon>
        <taxon>Bacilli</taxon>
        <taxon>Bacillales</taxon>
        <taxon>Staphylococcaceae</taxon>
        <taxon>Staphylococcus</taxon>
    </lineage>
</organism>
<protein>
    <recommendedName>
        <fullName evidence="1">Imidazoleglycerol-phosphate dehydratase</fullName>
        <shortName evidence="1">IGPD</shortName>
        <ecNumber evidence="1">4.2.1.19</ecNumber>
    </recommendedName>
</protein>
<evidence type="ECO:0000255" key="1">
    <source>
        <dbReference type="HAMAP-Rule" id="MF_00076"/>
    </source>
</evidence>
<accession>Q2FDI5</accession>
<dbReference type="EC" id="4.2.1.19" evidence="1"/>
<dbReference type="EMBL" id="CP000255">
    <property type="protein sequence ID" value="ABD21019.1"/>
    <property type="molecule type" value="Genomic_DNA"/>
</dbReference>
<dbReference type="RefSeq" id="WP_000640266.1">
    <property type="nucleotide sequence ID" value="NZ_CP027476.1"/>
</dbReference>
<dbReference type="SMR" id="Q2FDI5"/>
<dbReference type="KEGG" id="saa:SAUSA300_2609"/>
<dbReference type="HOGENOM" id="CLU_044308_3_0_9"/>
<dbReference type="OMA" id="GIPFFDH"/>
<dbReference type="UniPathway" id="UPA00031">
    <property type="reaction ID" value="UER00011"/>
</dbReference>
<dbReference type="Proteomes" id="UP000001939">
    <property type="component" value="Chromosome"/>
</dbReference>
<dbReference type="GO" id="GO:0005737">
    <property type="term" value="C:cytoplasm"/>
    <property type="evidence" value="ECO:0007669"/>
    <property type="project" value="UniProtKB-SubCell"/>
</dbReference>
<dbReference type="GO" id="GO:0004424">
    <property type="term" value="F:imidazoleglycerol-phosphate dehydratase activity"/>
    <property type="evidence" value="ECO:0007669"/>
    <property type="project" value="UniProtKB-UniRule"/>
</dbReference>
<dbReference type="GO" id="GO:0000105">
    <property type="term" value="P:L-histidine biosynthetic process"/>
    <property type="evidence" value="ECO:0007669"/>
    <property type="project" value="UniProtKB-UniRule"/>
</dbReference>
<dbReference type="CDD" id="cd07914">
    <property type="entry name" value="IGPD"/>
    <property type="match status" value="1"/>
</dbReference>
<dbReference type="FunFam" id="3.30.230.40:FF:000001">
    <property type="entry name" value="Imidazoleglycerol-phosphate dehydratase HisB"/>
    <property type="match status" value="1"/>
</dbReference>
<dbReference type="FunFam" id="3.30.230.40:FF:000003">
    <property type="entry name" value="Imidazoleglycerol-phosphate dehydratase HisB"/>
    <property type="match status" value="1"/>
</dbReference>
<dbReference type="Gene3D" id="3.30.230.40">
    <property type="entry name" value="Imidazole glycerol phosphate dehydratase, domain 1"/>
    <property type="match status" value="2"/>
</dbReference>
<dbReference type="HAMAP" id="MF_00076">
    <property type="entry name" value="HisB"/>
    <property type="match status" value="1"/>
</dbReference>
<dbReference type="InterPro" id="IPR038494">
    <property type="entry name" value="IGPD_sf"/>
</dbReference>
<dbReference type="InterPro" id="IPR000807">
    <property type="entry name" value="ImidazoleglycerolP_deHydtase"/>
</dbReference>
<dbReference type="InterPro" id="IPR020565">
    <property type="entry name" value="ImidazoleglycerP_deHydtase_CS"/>
</dbReference>
<dbReference type="InterPro" id="IPR020568">
    <property type="entry name" value="Ribosomal_Su5_D2-typ_SF"/>
</dbReference>
<dbReference type="NCBIfam" id="NF002107">
    <property type="entry name" value="PRK00951.1-2"/>
    <property type="match status" value="1"/>
</dbReference>
<dbReference type="NCBIfam" id="NF002111">
    <property type="entry name" value="PRK00951.2-1"/>
    <property type="match status" value="1"/>
</dbReference>
<dbReference type="NCBIfam" id="NF002114">
    <property type="entry name" value="PRK00951.2-4"/>
    <property type="match status" value="1"/>
</dbReference>
<dbReference type="PANTHER" id="PTHR23133:SF2">
    <property type="entry name" value="IMIDAZOLEGLYCEROL-PHOSPHATE DEHYDRATASE"/>
    <property type="match status" value="1"/>
</dbReference>
<dbReference type="PANTHER" id="PTHR23133">
    <property type="entry name" value="IMIDAZOLEGLYCEROL-PHOSPHATE DEHYDRATASE HIS7"/>
    <property type="match status" value="1"/>
</dbReference>
<dbReference type="Pfam" id="PF00475">
    <property type="entry name" value="IGPD"/>
    <property type="match status" value="1"/>
</dbReference>
<dbReference type="SUPFAM" id="SSF54211">
    <property type="entry name" value="Ribosomal protein S5 domain 2-like"/>
    <property type="match status" value="2"/>
</dbReference>
<dbReference type="PROSITE" id="PS00954">
    <property type="entry name" value="IGP_DEHYDRATASE_1"/>
    <property type="match status" value="1"/>
</dbReference>
<dbReference type="PROSITE" id="PS00955">
    <property type="entry name" value="IGP_DEHYDRATASE_2"/>
    <property type="match status" value="1"/>
</dbReference>
<keyword id="KW-0028">Amino-acid biosynthesis</keyword>
<keyword id="KW-0963">Cytoplasm</keyword>
<keyword id="KW-0368">Histidine biosynthesis</keyword>
<keyword id="KW-0456">Lyase</keyword>
<sequence>MIYQKQRNTAETQLNISISDDQSPSHINTGVGFLNHMLTLFTFHSGLSLNIEAQGDIDVDDHHVTEDIGIVIGQLLLEMIKDKKHFVRYGTMYIPMDETLARVVVDISGRPYLSFNASLSKEKVGTFDTELVEEFFRAVVINARLTTHIDLIRGGNTHHEIEAIFKAFSRALGIALTATDDQRVPSSKGVIE</sequence>
<proteinExistence type="inferred from homology"/>